<gene>
    <name type="primary">SPO11-2</name>
</gene>
<organism>
    <name type="scientific">Oryza sativa subsp. indica</name>
    <name type="common">Rice</name>
    <dbReference type="NCBI Taxonomy" id="39946"/>
    <lineage>
        <taxon>Eukaryota</taxon>
        <taxon>Viridiplantae</taxon>
        <taxon>Streptophyta</taxon>
        <taxon>Embryophyta</taxon>
        <taxon>Tracheophyta</taxon>
        <taxon>Spermatophyta</taxon>
        <taxon>Magnoliopsida</taxon>
        <taxon>Liliopsida</taxon>
        <taxon>Poales</taxon>
        <taxon>Poaceae</taxon>
        <taxon>BOP clade</taxon>
        <taxon>Oryzoideae</taxon>
        <taxon>Oryzeae</taxon>
        <taxon>Oryzinae</taxon>
        <taxon>Oryza</taxon>
        <taxon>Oryza sativa</taxon>
    </lineage>
</organism>
<proteinExistence type="evidence at protein level"/>
<feature type="chain" id="PRO_0000429777" description="Meiotic recombination protein SPO11-2">
    <location>
        <begin position="1"/>
        <end position="385"/>
    </location>
</feature>
<feature type="domain" description="Topo IIA-type catalytic" evidence="3">
    <location>
        <begin position="24"/>
        <end position="169"/>
    </location>
</feature>
<feature type="active site" description="O-(5'-phospho-DNA)-tyrosine intermediate" evidence="3">
    <location>
        <position position="126"/>
    </location>
</feature>
<feature type="binding site" evidence="2">
    <location>
        <position position="219"/>
    </location>
    <ligand>
        <name>Mg(2+)</name>
        <dbReference type="ChEBI" id="CHEBI:18420"/>
    </ligand>
</feature>
<feature type="binding site" evidence="2">
    <location>
        <position position="272"/>
    </location>
    <ligand>
        <name>Mg(2+)</name>
        <dbReference type="ChEBI" id="CHEBI:18420"/>
    </ligand>
</feature>
<evidence type="ECO:0000250" key="1"/>
<evidence type="ECO:0000250" key="2">
    <source>
        <dbReference type="UniProtKB" id="Q57815"/>
    </source>
</evidence>
<evidence type="ECO:0000255" key="3">
    <source>
        <dbReference type="PROSITE-ProRule" id="PRU01385"/>
    </source>
</evidence>
<evidence type="ECO:0000269" key="4">
    <source>
    </source>
</evidence>
<evidence type="ECO:0000305" key="5"/>
<accession>Q5ZPI9</accession>
<name>SPO12_ORYSI</name>
<comment type="function">
    <text evidence="1">Required for meiotic recombination. Mediates DNA cleavage that forms the double-strand breaks (DSB) that initiate meiotic recombination (By similarity).</text>
</comment>
<comment type="catalytic activity">
    <reaction evidence="3">
        <text>ATP-dependent breakage, passage and rejoining of double-stranded DNA.</text>
        <dbReference type="EC" id="5.6.2.2"/>
    </reaction>
</comment>
<comment type="cofactor">
    <cofactor evidence="2">
        <name>Mg(2+)</name>
        <dbReference type="ChEBI" id="CHEBI:18420"/>
    </cofactor>
</comment>
<comment type="subunit">
    <text evidence="4">Interacts with TOP6B.</text>
</comment>
<comment type="subcellular location">
    <subcellularLocation>
        <location evidence="1">Nucleus</location>
    </subcellularLocation>
</comment>
<comment type="tissue specificity">
    <text evidence="4">Highly expressed in flowers before pollination. Expressed in roots and shoots.</text>
</comment>
<comment type="induction">
    <text evidence="4">By auxin and benzylaminopurine.</text>
</comment>
<comment type="similarity">
    <text evidence="5">Belongs to the TOP6A family.</text>
</comment>
<keyword id="KW-0238">DNA-binding</keyword>
<keyword id="KW-0378">Hydrolase</keyword>
<keyword id="KW-0413">Isomerase</keyword>
<keyword id="KW-0460">Magnesium</keyword>
<keyword id="KW-0479">Metal-binding</keyword>
<keyword id="KW-0539">Nucleus</keyword>
<keyword id="KW-0799">Topoisomerase</keyword>
<protein>
    <recommendedName>
        <fullName>Meiotic recombination protein SPO11-2</fullName>
        <shortName>OsSPO11-2</shortName>
        <ecNumber evidence="3">5.6.2.2</ecNumber>
    </recommendedName>
    <alternativeName>
        <fullName>Topoisomerase 6 subunit A2</fullName>
        <shortName>OsTOP6A2</shortName>
    </alternativeName>
</protein>
<sequence length="385" mass="42755">MAEAGVAAASLFGADRRLCSADILPPAEVRARIEVAVLNFLAALTDPAAPAISALPLISRGAANRGLRRALLRDDVSSVYLSYASCKRSLTRANDAKAFVRVWKVMEMCYKILGEGKLVTLRELFYTLLSESPTYFTCQRHVNQTVQDVVSLLRCTRQSLGIMASSRGALIGRLVLQGPEEEHVDCSILGPSGHAITGDLNVLSKLIFSSDARYIIVVEKDAIFQRLAEDRIYSHLPCILITAKGYPDLATRFILHRLSQTYPNMPIFALVDWNPAGLAILCTYKYGSISMGLESYRYACNVKWLGLRGDDLQLIPQSAYQELKPRDLQIAKSLLSSKFLQDKHRAELTLMLETGKRAEIEALYSHGFDFLGKYVARKIVQGDYI</sequence>
<dbReference type="EC" id="5.6.2.2" evidence="3"/>
<dbReference type="EMBL" id="AJ605583">
    <property type="protein sequence ID" value="CAE53723.1"/>
    <property type="molecule type" value="mRNA"/>
</dbReference>
<dbReference type="SMR" id="Q5ZPI9"/>
<dbReference type="GO" id="GO:0000228">
    <property type="term" value="C:nuclear chromosome"/>
    <property type="evidence" value="ECO:0007669"/>
    <property type="project" value="TreeGrafter"/>
</dbReference>
<dbReference type="GO" id="GO:0005524">
    <property type="term" value="F:ATP binding"/>
    <property type="evidence" value="ECO:0007669"/>
    <property type="project" value="InterPro"/>
</dbReference>
<dbReference type="GO" id="GO:0003677">
    <property type="term" value="F:DNA binding"/>
    <property type="evidence" value="ECO:0007669"/>
    <property type="project" value="UniProtKB-KW"/>
</dbReference>
<dbReference type="GO" id="GO:0003918">
    <property type="term" value="F:DNA topoisomerase type II (double strand cut, ATP-hydrolyzing) activity"/>
    <property type="evidence" value="ECO:0007669"/>
    <property type="project" value="InterPro"/>
</dbReference>
<dbReference type="GO" id="GO:0016787">
    <property type="term" value="F:hydrolase activity"/>
    <property type="evidence" value="ECO:0007669"/>
    <property type="project" value="UniProtKB-KW"/>
</dbReference>
<dbReference type="GO" id="GO:0046872">
    <property type="term" value="F:metal ion binding"/>
    <property type="evidence" value="ECO:0007669"/>
    <property type="project" value="UniProtKB-KW"/>
</dbReference>
<dbReference type="GO" id="GO:0042138">
    <property type="term" value="P:meiotic DNA double-strand break formation"/>
    <property type="evidence" value="ECO:0007669"/>
    <property type="project" value="TreeGrafter"/>
</dbReference>
<dbReference type="GO" id="GO:0000706">
    <property type="term" value="P:meiotic DNA double-strand break processing"/>
    <property type="evidence" value="ECO:0007669"/>
    <property type="project" value="TreeGrafter"/>
</dbReference>
<dbReference type="GO" id="GO:0007131">
    <property type="term" value="P:reciprocal meiotic recombination"/>
    <property type="evidence" value="ECO:0007669"/>
    <property type="project" value="TreeGrafter"/>
</dbReference>
<dbReference type="CDD" id="cd00223">
    <property type="entry name" value="TOPRIM_TopoIIB_SPO"/>
    <property type="match status" value="1"/>
</dbReference>
<dbReference type="FunFam" id="1.10.10.10:FF:000487">
    <property type="entry name" value="Meiotic recombination protein SPO11-2"/>
    <property type="match status" value="1"/>
</dbReference>
<dbReference type="FunFam" id="3.40.1360.10:FF:000009">
    <property type="entry name" value="Meiotic recombination protein SPO11-2"/>
    <property type="match status" value="1"/>
</dbReference>
<dbReference type="Gene3D" id="3.40.1360.10">
    <property type="match status" value="1"/>
</dbReference>
<dbReference type="Gene3D" id="1.10.10.10">
    <property type="entry name" value="Winged helix-like DNA-binding domain superfamily/Winged helix DNA-binding domain"/>
    <property type="match status" value="1"/>
</dbReference>
<dbReference type="InterPro" id="IPR002815">
    <property type="entry name" value="Spo11/TopoVI_A"/>
</dbReference>
<dbReference type="InterPro" id="IPR013049">
    <property type="entry name" value="Spo11/TopoVI_A_N"/>
</dbReference>
<dbReference type="InterPro" id="IPR036078">
    <property type="entry name" value="Spo11/TopoVI_A_sf"/>
</dbReference>
<dbReference type="InterPro" id="IPR034136">
    <property type="entry name" value="TOPRIM_Topo6A/Spo11"/>
</dbReference>
<dbReference type="InterPro" id="IPR036388">
    <property type="entry name" value="WH-like_DNA-bd_sf"/>
</dbReference>
<dbReference type="PANTHER" id="PTHR10848">
    <property type="entry name" value="MEIOTIC RECOMBINATION PROTEIN SPO11"/>
    <property type="match status" value="1"/>
</dbReference>
<dbReference type="PANTHER" id="PTHR10848:SF0">
    <property type="entry name" value="MEIOTIC RECOMBINATION PROTEIN SPO11"/>
    <property type="match status" value="1"/>
</dbReference>
<dbReference type="Pfam" id="PF21180">
    <property type="entry name" value="TOP6A-Spo11_Toprim"/>
    <property type="match status" value="1"/>
</dbReference>
<dbReference type="Pfam" id="PF04406">
    <property type="entry name" value="TP6A_N"/>
    <property type="match status" value="1"/>
</dbReference>
<dbReference type="PRINTS" id="PR01550">
    <property type="entry name" value="TOP6AFAMILY"/>
</dbReference>
<dbReference type="SUPFAM" id="SSF56726">
    <property type="entry name" value="DNA topoisomerase IV, alpha subunit"/>
    <property type="match status" value="1"/>
</dbReference>
<dbReference type="PROSITE" id="PS52041">
    <property type="entry name" value="TOPO_IIB"/>
    <property type="match status" value="1"/>
</dbReference>
<reference key="1">
    <citation type="journal article" date="2006" name="FEBS J.">
        <title>Overexpression of putative topoisomerase 6 genes from rice confers stress tolerance in transgenic Arabidopsis plants.</title>
        <authorList>
            <person name="Jain M."/>
            <person name="Tyagi A.K."/>
            <person name="Khurana J.P."/>
        </authorList>
    </citation>
    <scope>NUCLEOTIDE SEQUENCE [MRNA]</scope>
    <scope>INTERACTION WITH TOP6B</scope>
    <scope>TISSUE SPECIFICITY</scope>
    <scope>INDUCTION</scope>
    <source>
        <strain>cv. Pusa Basmati</strain>
    </source>
</reference>